<accession>P0DJB9</accession>
<comment type="subcellular location">
    <subcellularLocation>
        <location>Secreted</location>
    </subcellularLocation>
</comment>
<comment type="tissue specificity">
    <text>Expressed by the venom duct.</text>
</comment>
<comment type="domain">
    <text evidence="1">The presence of a 'disulfide through disulfide knot' structurally defines this protein as a knottin.</text>
</comment>
<comment type="domain">
    <text>The cysteine framework is VI/VII (C-C-CC-C-C).</text>
</comment>
<proteinExistence type="evidence at protein level"/>
<reference key="1">
    <citation type="journal article" date="2010" name="Mol. Phylogenet. Evol.">
        <title>Evolution of Conus peptide toxins: analysis of Conus californicus Reeve, 1844.</title>
        <authorList>
            <person name="Biggs J.S."/>
            <person name="Watkins M."/>
            <person name="Puillandre N."/>
            <person name="Ownby J.P."/>
            <person name="Lopez-Vera E."/>
            <person name="Christensen S."/>
            <person name="Moreno K.J."/>
            <person name="Bernaldez J."/>
            <person name="Licea-Navarro A."/>
            <person name="Corneli P.S."/>
            <person name="Olivera B.M."/>
        </authorList>
    </citation>
    <scope>PROTEIN SEQUENCE</scope>
    <source>
        <tissue>Venom</tissue>
    </source>
</reference>
<organism>
    <name type="scientific">Californiconus californicus</name>
    <name type="common">California cone</name>
    <name type="synonym">Conus californicus</name>
    <dbReference type="NCBI Taxonomy" id="1736779"/>
    <lineage>
        <taxon>Eukaryota</taxon>
        <taxon>Metazoa</taxon>
        <taxon>Spiralia</taxon>
        <taxon>Lophotrochozoa</taxon>
        <taxon>Mollusca</taxon>
        <taxon>Gastropoda</taxon>
        <taxon>Caenogastropoda</taxon>
        <taxon>Neogastropoda</taxon>
        <taxon>Conoidea</taxon>
        <taxon>Conidae</taxon>
        <taxon>Californiconus</taxon>
    </lineage>
</organism>
<name>U6C_CONCL</name>
<dbReference type="GO" id="GO:0005576">
    <property type="term" value="C:extracellular region"/>
    <property type="evidence" value="ECO:0007669"/>
    <property type="project" value="UniProtKB-SubCell"/>
</dbReference>
<dbReference type="GO" id="GO:0090729">
    <property type="term" value="F:toxin activity"/>
    <property type="evidence" value="ECO:0007669"/>
    <property type="project" value="UniProtKB-KW"/>
</dbReference>
<evidence type="ECO:0000250" key="1"/>
<evidence type="ECO:0000303" key="2">
    <source>
    </source>
</evidence>
<evidence type="ECO:0000305" key="3"/>
<feature type="peptide" id="PRO_0000415055" description="Conotoxin Cl6c">
    <location>
        <begin position="1"/>
        <end position="23"/>
    </location>
</feature>
<feature type="disulfide bond" evidence="1">
    <location>
        <begin position="2"/>
        <end position="12"/>
    </location>
</feature>
<feature type="disulfide bond" evidence="1">
    <location>
        <begin position="5"/>
        <end position="17"/>
    </location>
</feature>
<feature type="disulfide bond" evidence="1">
    <location>
        <begin position="11"/>
        <end position="21"/>
    </location>
</feature>
<keyword id="KW-0903">Direct protein sequencing</keyword>
<keyword id="KW-1015">Disulfide bond</keyword>
<keyword id="KW-0960">Knottin</keyword>
<keyword id="KW-0528">Neurotoxin</keyword>
<keyword id="KW-0964">Secreted</keyword>
<keyword id="KW-0800">Toxin</keyword>
<sequence length="23" mass="2518">GCWICWGPNACCRGSVCHDYCPS</sequence>
<protein>
    <recommendedName>
        <fullName evidence="2">Conotoxin Cl6c</fullName>
    </recommendedName>
    <alternativeName>
        <fullName evidence="3">Cal6.4d</fullName>
    </alternativeName>
</protein>